<keyword id="KW-1185">Reference proteome</keyword>
<keyword id="KW-0732">Signal</keyword>
<sequence>MLGLKGCLTILIGYVIAVCALFSSRGRNPSLTDWEKLKDQKISNIDNFGLTGQHLLEFFQENLPFLSFSEEKYRHKHVSLYYDVFKEYILRRASSKKCLPVDSAIAKLNKDVNPMPVHSHNDYWRKLPLFEGLAYGASSTEADVWNIDEKILAVGHNEAYLDPVELTLDKLYTGPLLEILDEVNCQDSDADRKNGVFFNSPETSLFFYIDFKSDDNELTYKLLMEQYFKSLIDSGYLTYYDMKKDEIIWRPVTVILTGNYPTSLDILDNGNDNGYFESSQRFAFLDAPLLSLEPKYSKLSVAATVSFSQLMKHCGSDHWKVSLRGRMDSNEISCAKSIIDGAHALKLKTRIWGAPTWPANLVETISRQIIHDLGSDLLNLDNLFMASSLI</sequence>
<reference key="1">
    <citation type="journal article" date="1997" name="Nature">
        <title>The nucleotide sequence of Saccharomyces cerevisiae chromosome IV.</title>
        <authorList>
            <person name="Jacq C."/>
            <person name="Alt-Moerbe J."/>
            <person name="Andre B."/>
            <person name="Arnold W."/>
            <person name="Bahr A."/>
            <person name="Ballesta J.P.G."/>
            <person name="Bargues M."/>
            <person name="Baron L."/>
            <person name="Becker A."/>
            <person name="Biteau N."/>
            <person name="Bloecker H."/>
            <person name="Blugeon C."/>
            <person name="Boskovic J."/>
            <person name="Brandt P."/>
            <person name="Brueckner M."/>
            <person name="Buitrago M.J."/>
            <person name="Coster F."/>
            <person name="Delaveau T."/>
            <person name="del Rey F."/>
            <person name="Dujon B."/>
            <person name="Eide L.G."/>
            <person name="Garcia-Cantalejo J.M."/>
            <person name="Goffeau A."/>
            <person name="Gomez-Peris A."/>
            <person name="Granotier C."/>
            <person name="Hanemann V."/>
            <person name="Hankeln T."/>
            <person name="Hoheisel J.D."/>
            <person name="Jaeger W."/>
            <person name="Jimenez A."/>
            <person name="Jonniaux J.-L."/>
            <person name="Kraemer C."/>
            <person name="Kuester H."/>
            <person name="Laamanen P."/>
            <person name="Legros Y."/>
            <person name="Louis E.J."/>
            <person name="Moeller-Rieker S."/>
            <person name="Monnet A."/>
            <person name="Moro M."/>
            <person name="Mueller-Auer S."/>
            <person name="Nussbaumer B."/>
            <person name="Paricio N."/>
            <person name="Paulin L."/>
            <person name="Perea J."/>
            <person name="Perez-Alonso M."/>
            <person name="Perez-Ortin J.E."/>
            <person name="Pohl T.M."/>
            <person name="Prydz H."/>
            <person name="Purnelle B."/>
            <person name="Rasmussen S.W."/>
            <person name="Remacha M.A."/>
            <person name="Revuelta J.L."/>
            <person name="Rieger M."/>
            <person name="Salom D."/>
            <person name="Saluz H.P."/>
            <person name="Saiz J.E."/>
            <person name="Saren A.-M."/>
            <person name="Schaefer M."/>
            <person name="Scharfe M."/>
            <person name="Schmidt E.R."/>
            <person name="Schneider C."/>
            <person name="Scholler P."/>
            <person name="Schwarz S."/>
            <person name="Soler-Mira A."/>
            <person name="Urrestarazu L.A."/>
            <person name="Verhasselt P."/>
            <person name="Vissers S."/>
            <person name="Voet M."/>
            <person name="Volckaert G."/>
            <person name="Wagner G."/>
            <person name="Wambutt R."/>
            <person name="Wedler E."/>
            <person name="Wedler H."/>
            <person name="Woelfl S."/>
            <person name="Harris D.E."/>
            <person name="Bowman S."/>
            <person name="Brown D."/>
            <person name="Churcher C.M."/>
            <person name="Connor R."/>
            <person name="Dedman K."/>
            <person name="Gentles S."/>
            <person name="Hamlin N."/>
            <person name="Hunt S."/>
            <person name="Jones L."/>
            <person name="McDonald S."/>
            <person name="Murphy L.D."/>
            <person name="Niblett D."/>
            <person name="Odell C."/>
            <person name="Oliver K."/>
            <person name="Rajandream M.A."/>
            <person name="Richards C."/>
            <person name="Shore L."/>
            <person name="Walsh S.V."/>
            <person name="Barrell B.G."/>
            <person name="Dietrich F.S."/>
            <person name="Mulligan J.T."/>
            <person name="Allen E."/>
            <person name="Araujo R."/>
            <person name="Aviles E."/>
            <person name="Berno A."/>
            <person name="Carpenter J."/>
            <person name="Chen E."/>
            <person name="Cherry J.M."/>
            <person name="Chung E."/>
            <person name="Duncan M."/>
            <person name="Hunicke-Smith S."/>
            <person name="Hyman R.W."/>
            <person name="Komp C."/>
            <person name="Lashkari D."/>
            <person name="Lew H."/>
            <person name="Lin D."/>
            <person name="Mosedale D."/>
            <person name="Nakahara K."/>
            <person name="Namath A."/>
            <person name="Oefner P."/>
            <person name="Oh C."/>
            <person name="Petel F.X."/>
            <person name="Roberts D."/>
            <person name="Schramm S."/>
            <person name="Schroeder M."/>
            <person name="Shogren T."/>
            <person name="Shroff N."/>
            <person name="Winant A."/>
            <person name="Yelton M.A."/>
            <person name="Botstein D."/>
            <person name="Davis R.W."/>
            <person name="Johnston M."/>
            <person name="Andrews S."/>
            <person name="Brinkman R."/>
            <person name="Cooper J."/>
            <person name="Ding H."/>
            <person name="Du Z."/>
            <person name="Favello A."/>
            <person name="Fulton L."/>
            <person name="Gattung S."/>
            <person name="Greco T."/>
            <person name="Hallsworth K."/>
            <person name="Hawkins J."/>
            <person name="Hillier L.W."/>
            <person name="Jier M."/>
            <person name="Johnson D."/>
            <person name="Johnston L."/>
            <person name="Kirsten J."/>
            <person name="Kucaba T."/>
            <person name="Langston Y."/>
            <person name="Latreille P."/>
            <person name="Le T."/>
            <person name="Mardis E."/>
            <person name="Menezes S."/>
            <person name="Miller N."/>
            <person name="Nhan M."/>
            <person name="Pauley A."/>
            <person name="Peluso D."/>
            <person name="Rifkin L."/>
            <person name="Riles L."/>
            <person name="Taich A."/>
            <person name="Trevaskis E."/>
            <person name="Vignati D."/>
            <person name="Wilcox L."/>
            <person name="Wohldman P."/>
            <person name="Vaudin M."/>
            <person name="Wilson R."/>
            <person name="Waterston R."/>
            <person name="Albermann K."/>
            <person name="Hani J."/>
            <person name="Heumann K."/>
            <person name="Kleine K."/>
            <person name="Mewes H.-W."/>
            <person name="Zollner A."/>
            <person name="Zaccaria P."/>
        </authorList>
    </citation>
    <scope>NUCLEOTIDE SEQUENCE [LARGE SCALE GENOMIC DNA]</scope>
    <source>
        <strain>ATCC 204508 / S288c</strain>
    </source>
</reference>
<reference key="2">
    <citation type="journal article" date="2014" name="G3 (Bethesda)">
        <title>The reference genome sequence of Saccharomyces cerevisiae: Then and now.</title>
        <authorList>
            <person name="Engel S.R."/>
            <person name="Dietrich F.S."/>
            <person name="Fisk D.G."/>
            <person name="Binkley G."/>
            <person name="Balakrishnan R."/>
            <person name="Costanzo M.C."/>
            <person name="Dwight S.S."/>
            <person name="Hitz B.C."/>
            <person name="Karra K."/>
            <person name="Nash R.S."/>
            <person name="Weng S."/>
            <person name="Wong E.D."/>
            <person name="Lloyd P."/>
            <person name="Skrzypek M.S."/>
            <person name="Miyasato S.R."/>
            <person name="Simison M."/>
            <person name="Cherry J.M."/>
        </authorList>
    </citation>
    <scope>GENOME REANNOTATION</scope>
    <scope>SEQUENCE REVISION TO 44</scope>
    <source>
        <strain>ATCC 204508 / S288c</strain>
    </source>
</reference>
<reference key="3">
    <citation type="journal article" date="2007" name="Genome Res.">
        <title>Approaching a complete repository of sequence-verified protein-encoding clones for Saccharomyces cerevisiae.</title>
        <authorList>
            <person name="Hu Y."/>
            <person name="Rolfs A."/>
            <person name="Bhullar B."/>
            <person name="Murthy T.V.S."/>
            <person name="Zhu C."/>
            <person name="Berger M.F."/>
            <person name="Camargo A.A."/>
            <person name="Kelley F."/>
            <person name="McCarron S."/>
            <person name="Jepson D."/>
            <person name="Richardson A."/>
            <person name="Raphael J."/>
            <person name="Moreira D."/>
            <person name="Taycher E."/>
            <person name="Zuo D."/>
            <person name="Mohr S."/>
            <person name="Kane M.F."/>
            <person name="Williamson J."/>
            <person name="Simpson A.J.G."/>
            <person name="Bulyk M.L."/>
            <person name="Harlow E."/>
            <person name="Marsischky G."/>
            <person name="Kolodner R.D."/>
            <person name="LaBaer J."/>
        </authorList>
    </citation>
    <scope>NUCLEOTIDE SEQUENCE [GENOMIC DNA]</scope>
    <source>
        <strain>ATCC 204508 / S288c</strain>
    </source>
</reference>
<reference key="4">
    <citation type="journal article" date="2009" name="PLoS Genet.">
        <title>Computationally driven, quantitative experiments discover genes required for mitochondrial biogenesis.</title>
        <authorList>
            <person name="Hess D.C."/>
            <person name="Myers C.L."/>
            <person name="Huttenhower C."/>
            <person name="Hibbs M.A."/>
            <person name="Hayes A.P."/>
            <person name="Paw J."/>
            <person name="Clore J.J."/>
            <person name="Mendoza R.M."/>
            <person name="Luis B.S."/>
            <person name="Nislow C."/>
            <person name="Giaever G."/>
            <person name="Costanzo M."/>
            <person name="Troyanskaya O.G."/>
            <person name="Caudy A.A."/>
        </authorList>
    </citation>
    <scope>DISRUPTION PHENOTYPE</scope>
</reference>
<reference key="5">
    <citation type="journal article" date="2018" name="J. Proteome Res.">
        <title>Enrichment-based proteogenomics identifies microproteins, missing proteins, and novel smORFs in Saccharomyces cerevisiae.</title>
        <authorList>
            <person name="He C."/>
            <person name="Jia C."/>
            <person name="Zhang Y."/>
            <person name="Xu P."/>
        </authorList>
    </citation>
    <scope>IDENTIFICATION BY MASS SPECTROMETRY</scope>
</reference>
<proteinExistence type="evidence at protein level"/>
<dbReference type="EMBL" id="Z74285">
    <property type="protein sequence ID" value="CAA98817.1"/>
    <property type="molecule type" value="Genomic_DNA"/>
</dbReference>
<dbReference type="EMBL" id="AY692568">
    <property type="protein sequence ID" value="AAT92587.1"/>
    <property type="molecule type" value="Genomic_DNA"/>
</dbReference>
<dbReference type="EMBL" id="BK006938">
    <property type="protein sequence ID" value="DAA11629.2"/>
    <property type="molecule type" value="Genomic_DNA"/>
</dbReference>
<dbReference type="PIR" id="S67801">
    <property type="entry name" value="S67801"/>
</dbReference>
<dbReference type="RefSeq" id="NP_010044.2">
    <property type="nucleotide sequence ID" value="NM_001180297.2"/>
</dbReference>
<dbReference type="BioGRID" id="31874">
    <property type="interactions" value="34"/>
</dbReference>
<dbReference type="DIP" id="DIP-3809N"/>
<dbReference type="FunCoup" id="Q07716">
    <property type="interactions" value="29"/>
</dbReference>
<dbReference type="IntAct" id="Q07716">
    <property type="interactions" value="2"/>
</dbReference>
<dbReference type="STRING" id="4932.YDL237W"/>
<dbReference type="iPTMnet" id="Q07716"/>
<dbReference type="PaxDb" id="4932-YDL237W"/>
<dbReference type="PeptideAtlas" id="Q07716"/>
<dbReference type="EnsemblFungi" id="YDL237W_mRNA">
    <property type="protein sequence ID" value="YDL237W"/>
    <property type="gene ID" value="YDL237W"/>
</dbReference>
<dbReference type="GeneID" id="851361"/>
<dbReference type="KEGG" id="sce:YDL237W"/>
<dbReference type="AGR" id="SGD:S000002396"/>
<dbReference type="SGD" id="S000002396">
    <property type="gene designation" value="AIM6"/>
</dbReference>
<dbReference type="VEuPathDB" id="FungiDB:YDL237W"/>
<dbReference type="eggNOG" id="ENOG502QVA8">
    <property type="taxonomic scope" value="Eukaryota"/>
</dbReference>
<dbReference type="GeneTree" id="ENSGT00940000176814"/>
<dbReference type="HOGENOM" id="CLU_031561_1_1_1"/>
<dbReference type="InParanoid" id="Q07716"/>
<dbReference type="OMA" id="HWGCTGV"/>
<dbReference type="OrthoDB" id="4153866at2759"/>
<dbReference type="BioCyc" id="YEAST:G3O-29614-MONOMER"/>
<dbReference type="BioGRID-ORCS" id="851361">
    <property type="hits" value="6 hits in 10 CRISPR screens"/>
</dbReference>
<dbReference type="PRO" id="PR:Q07716"/>
<dbReference type="Proteomes" id="UP000002311">
    <property type="component" value="Chromosome IV"/>
</dbReference>
<dbReference type="RNAct" id="Q07716">
    <property type="molecule type" value="protein"/>
</dbReference>
<dbReference type="GO" id="GO:0008081">
    <property type="term" value="F:phosphoric diester hydrolase activity"/>
    <property type="evidence" value="ECO:0007669"/>
    <property type="project" value="InterPro"/>
</dbReference>
<dbReference type="GO" id="GO:0006629">
    <property type="term" value="P:lipid metabolic process"/>
    <property type="evidence" value="ECO:0007669"/>
    <property type="project" value="InterPro"/>
</dbReference>
<dbReference type="CDD" id="cd08577">
    <property type="entry name" value="PI-PLCc_GDPD_SF_unchar3"/>
    <property type="match status" value="1"/>
</dbReference>
<dbReference type="InterPro" id="IPR039559">
    <property type="entry name" value="AIM6_PI-PLC-like_dom"/>
</dbReference>
<dbReference type="InterPro" id="IPR051236">
    <property type="entry name" value="HAT_RTT109-like"/>
</dbReference>
<dbReference type="InterPro" id="IPR017946">
    <property type="entry name" value="PLC-like_Pdiesterase_TIM-brl"/>
</dbReference>
<dbReference type="PANTHER" id="PTHR31571">
    <property type="entry name" value="ALTERED INHERITANCE OF MITOCHONDRIA PROTEIN 6"/>
    <property type="match status" value="1"/>
</dbReference>
<dbReference type="PANTHER" id="PTHR31571:SF1">
    <property type="entry name" value="ALTERED INHERITANCE OF MITOCHONDRIA PROTEIN 6"/>
    <property type="match status" value="1"/>
</dbReference>
<dbReference type="SUPFAM" id="SSF51695">
    <property type="entry name" value="PLC-like phosphodiesterases"/>
    <property type="match status" value="1"/>
</dbReference>
<organism>
    <name type="scientific">Saccharomyces cerevisiae (strain ATCC 204508 / S288c)</name>
    <name type="common">Baker's yeast</name>
    <dbReference type="NCBI Taxonomy" id="559292"/>
    <lineage>
        <taxon>Eukaryota</taxon>
        <taxon>Fungi</taxon>
        <taxon>Dikarya</taxon>
        <taxon>Ascomycota</taxon>
        <taxon>Saccharomycotina</taxon>
        <taxon>Saccharomycetes</taxon>
        <taxon>Saccharomycetales</taxon>
        <taxon>Saccharomycetaceae</taxon>
        <taxon>Saccharomyces</taxon>
    </lineage>
</organism>
<evidence type="ECO:0000255" key="1"/>
<evidence type="ECO:0000269" key="2">
    <source>
    </source>
</evidence>
<evidence type="ECO:0000303" key="3">
    <source>
    </source>
</evidence>
<evidence type="ECO:0000305" key="4"/>
<evidence type="ECO:0000312" key="5">
    <source>
        <dbReference type="SGD" id="S000002396"/>
    </source>
</evidence>
<comment type="disruption phenotype">
    <text evidence="2">Impairs respiratory growth.</text>
</comment>
<comment type="similarity">
    <text evidence="4">Belongs to the AIM6 family.</text>
</comment>
<feature type="signal peptide" evidence="1">
    <location>
        <begin position="1"/>
        <end position="17"/>
    </location>
</feature>
<feature type="chain" id="PRO_0000242484" description="Altered inheritance of mitochondria protein 6">
    <location>
        <begin position="18"/>
        <end position="390"/>
    </location>
</feature>
<feature type="sequence conflict" description="In Ref. 1; CAA98817." evidence="4" ref="1">
    <original>N</original>
    <variation>D</variation>
    <location>
        <position position="44"/>
    </location>
</feature>
<protein>
    <recommendedName>
        <fullName evidence="3">Altered inheritance of mitochondria protein 6</fullName>
    </recommendedName>
</protein>
<gene>
    <name evidence="3" type="primary">AIM6</name>
    <name evidence="5" type="ordered locus">YDL237W</name>
</gene>
<name>AIM6_YEAST</name>
<accession>Q07716</accession>
<accession>D6VRB9</accession>
<accession>Q6B312</accession>